<name>RL2_DELAS</name>
<evidence type="ECO:0000255" key="1">
    <source>
        <dbReference type="HAMAP-Rule" id="MF_01320"/>
    </source>
</evidence>
<evidence type="ECO:0000256" key="2">
    <source>
        <dbReference type="SAM" id="MobiDB-lite"/>
    </source>
</evidence>
<evidence type="ECO:0000305" key="3"/>
<keyword id="KW-1185">Reference proteome</keyword>
<keyword id="KW-0687">Ribonucleoprotein</keyword>
<keyword id="KW-0689">Ribosomal protein</keyword>
<keyword id="KW-0694">RNA-binding</keyword>
<keyword id="KW-0699">rRNA-binding</keyword>
<sequence length="274" mass="30130">MAVIKLKPTTPGQRGTVKVTRDHLHKGAGFAPLLEPQHQKSGRNNNGHITTRHKGGGHKHHYRVVDFKRTKDGIPAKVERIEYDPNRTAHIALVCYADGERRYIIAPRNLEVGATIVSGSEAPIRVGNTLPIRNIPVGSTIHCIELKIGAGAQIARSAGTSATLLAREGIYAQVRMRSGEVRKVHIECRATIGEVANEEHSLRRLGKAGVKRWMGIRPTVRGVVMNPVDHPHGGGEGKTGEGRHAVDPWGNLTKGYRTRNNKRTQSMIVSRRKK</sequence>
<gene>
    <name evidence="1" type="primary">rplB</name>
    <name type="ordered locus">Daci_0394</name>
</gene>
<accession>A9BPS1</accession>
<protein>
    <recommendedName>
        <fullName evidence="1">Large ribosomal subunit protein uL2</fullName>
    </recommendedName>
    <alternativeName>
        <fullName evidence="3">50S ribosomal protein L2</fullName>
    </alternativeName>
</protein>
<dbReference type="EMBL" id="CP000884">
    <property type="protein sequence ID" value="ABX33040.1"/>
    <property type="molecule type" value="Genomic_DNA"/>
</dbReference>
<dbReference type="RefSeq" id="WP_012202332.1">
    <property type="nucleotide sequence ID" value="NC_010002.1"/>
</dbReference>
<dbReference type="SMR" id="A9BPS1"/>
<dbReference type="STRING" id="398578.Daci_0394"/>
<dbReference type="GeneID" id="94689736"/>
<dbReference type="KEGG" id="dac:Daci_0394"/>
<dbReference type="eggNOG" id="COG0090">
    <property type="taxonomic scope" value="Bacteria"/>
</dbReference>
<dbReference type="HOGENOM" id="CLU_036235_2_1_4"/>
<dbReference type="Proteomes" id="UP000000784">
    <property type="component" value="Chromosome"/>
</dbReference>
<dbReference type="GO" id="GO:0015934">
    <property type="term" value="C:large ribosomal subunit"/>
    <property type="evidence" value="ECO:0007669"/>
    <property type="project" value="InterPro"/>
</dbReference>
<dbReference type="GO" id="GO:0019843">
    <property type="term" value="F:rRNA binding"/>
    <property type="evidence" value="ECO:0007669"/>
    <property type="project" value="UniProtKB-UniRule"/>
</dbReference>
<dbReference type="GO" id="GO:0003735">
    <property type="term" value="F:structural constituent of ribosome"/>
    <property type="evidence" value="ECO:0007669"/>
    <property type="project" value="InterPro"/>
</dbReference>
<dbReference type="GO" id="GO:0016740">
    <property type="term" value="F:transferase activity"/>
    <property type="evidence" value="ECO:0007669"/>
    <property type="project" value="InterPro"/>
</dbReference>
<dbReference type="GO" id="GO:0002181">
    <property type="term" value="P:cytoplasmic translation"/>
    <property type="evidence" value="ECO:0007669"/>
    <property type="project" value="TreeGrafter"/>
</dbReference>
<dbReference type="FunFam" id="2.30.30.30:FF:000001">
    <property type="entry name" value="50S ribosomal protein L2"/>
    <property type="match status" value="1"/>
</dbReference>
<dbReference type="FunFam" id="2.40.50.140:FF:000003">
    <property type="entry name" value="50S ribosomal protein L2"/>
    <property type="match status" value="1"/>
</dbReference>
<dbReference type="FunFam" id="4.10.950.10:FF:000001">
    <property type="entry name" value="50S ribosomal protein L2"/>
    <property type="match status" value="1"/>
</dbReference>
<dbReference type="Gene3D" id="2.30.30.30">
    <property type="match status" value="1"/>
</dbReference>
<dbReference type="Gene3D" id="2.40.50.140">
    <property type="entry name" value="Nucleic acid-binding proteins"/>
    <property type="match status" value="1"/>
</dbReference>
<dbReference type="Gene3D" id="4.10.950.10">
    <property type="entry name" value="Ribosomal protein L2, domain 3"/>
    <property type="match status" value="1"/>
</dbReference>
<dbReference type="HAMAP" id="MF_01320_B">
    <property type="entry name" value="Ribosomal_uL2_B"/>
    <property type="match status" value="1"/>
</dbReference>
<dbReference type="InterPro" id="IPR012340">
    <property type="entry name" value="NA-bd_OB-fold"/>
</dbReference>
<dbReference type="InterPro" id="IPR014722">
    <property type="entry name" value="Rib_uL2_dom2"/>
</dbReference>
<dbReference type="InterPro" id="IPR002171">
    <property type="entry name" value="Ribosomal_uL2"/>
</dbReference>
<dbReference type="InterPro" id="IPR005880">
    <property type="entry name" value="Ribosomal_uL2_bac/org-type"/>
</dbReference>
<dbReference type="InterPro" id="IPR022669">
    <property type="entry name" value="Ribosomal_uL2_C"/>
</dbReference>
<dbReference type="InterPro" id="IPR022671">
    <property type="entry name" value="Ribosomal_uL2_CS"/>
</dbReference>
<dbReference type="InterPro" id="IPR014726">
    <property type="entry name" value="Ribosomal_uL2_dom3"/>
</dbReference>
<dbReference type="InterPro" id="IPR022666">
    <property type="entry name" value="Ribosomal_uL2_RNA-bd_dom"/>
</dbReference>
<dbReference type="InterPro" id="IPR008991">
    <property type="entry name" value="Translation_prot_SH3-like_sf"/>
</dbReference>
<dbReference type="NCBIfam" id="TIGR01171">
    <property type="entry name" value="rplB_bact"/>
    <property type="match status" value="1"/>
</dbReference>
<dbReference type="PANTHER" id="PTHR13691:SF5">
    <property type="entry name" value="LARGE RIBOSOMAL SUBUNIT PROTEIN UL2M"/>
    <property type="match status" value="1"/>
</dbReference>
<dbReference type="PANTHER" id="PTHR13691">
    <property type="entry name" value="RIBOSOMAL PROTEIN L2"/>
    <property type="match status" value="1"/>
</dbReference>
<dbReference type="Pfam" id="PF00181">
    <property type="entry name" value="Ribosomal_L2"/>
    <property type="match status" value="1"/>
</dbReference>
<dbReference type="Pfam" id="PF03947">
    <property type="entry name" value="Ribosomal_L2_C"/>
    <property type="match status" value="1"/>
</dbReference>
<dbReference type="PIRSF" id="PIRSF002158">
    <property type="entry name" value="Ribosomal_L2"/>
    <property type="match status" value="1"/>
</dbReference>
<dbReference type="SMART" id="SM01383">
    <property type="entry name" value="Ribosomal_L2"/>
    <property type="match status" value="1"/>
</dbReference>
<dbReference type="SMART" id="SM01382">
    <property type="entry name" value="Ribosomal_L2_C"/>
    <property type="match status" value="1"/>
</dbReference>
<dbReference type="SUPFAM" id="SSF50249">
    <property type="entry name" value="Nucleic acid-binding proteins"/>
    <property type="match status" value="1"/>
</dbReference>
<dbReference type="SUPFAM" id="SSF50104">
    <property type="entry name" value="Translation proteins SH3-like domain"/>
    <property type="match status" value="1"/>
</dbReference>
<dbReference type="PROSITE" id="PS00467">
    <property type="entry name" value="RIBOSOMAL_L2"/>
    <property type="match status" value="1"/>
</dbReference>
<proteinExistence type="inferred from homology"/>
<reference key="1">
    <citation type="submission" date="2007-11" db="EMBL/GenBank/DDBJ databases">
        <title>Complete sequence of Delftia acidovorans DSM 14801 / SPH-1.</title>
        <authorList>
            <person name="Copeland A."/>
            <person name="Lucas S."/>
            <person name="Lapidus A."/>
            <person name="Barry K."/>
            <person name="Glavina del Rio T."/>
            <person name="Dalin E."/>
            <person name="Tice H."/>
            <person name="Pitluck S."/>
            <person name="Lowry S."/>
            <person name="Clum A."/>
            <person name="Schmutz J."/>
            <person name="Larimer F."/>
            <person name="Land M."/>
            <person name="Hauser L."/>
            <person name="Kyrpides N."/>
            <person name="Kim E."/>
            <person name="Schleheck D."/>
            <person name="Richardson P."/>
        </authorList>
    </citation>
    <scope>NUCLEOTIDE SEQUENCE [LARGE SCALE GENOMIC DNA]</scope>
    <source>
        <strain>DSM 14801 / SPH-1</strain>
    </source>
</reference>
<organism>
    <name type="scientific">Delftia acidovorans (strain DSM 14801 / SPH-1)</name>
    <dbReference type="NCBI Taxonomy" id="398578"/>
    <lineage>
        <taxon>Bacteria</taxon>
        <taxon>Pseudomonadati</taxon>
        <taxon>Pseudomonadota</taxon>
        <taxon>Betaproteobacteria</taxon>
        <taxon>Burkholderiales</taxon>
        <taxon>Comamonadaceae</taxon>
        <taxon>Delftia</taxon>
    </lineage>
</organism>
<feature type="chain" id="PRO_1000141536" description="Large ribosomal subunit protein uL2">
    <location>
        <begin position="1"/>
        <end position="274"/>
    </location>
</feature>
<feature type="region of interest" description="Disordered" evidence="2">
    <location>
        <begin position="35"/>
        <end position="60"/>
    </location>
</feature>
<feature type="region of interest" description="Disordered" evidence="2">
    <location>
        <begin position="224"/>
        <end position="274"/>
    </location>
</feature>
<feature type="compositionally biased region" description="Basic residues" evidence="2">
    <location>
        <begin position="50"/>
        <end position="60"/>
    </location>
</feature>
<feature type="compositionally biased region" description="Basic and acidic residues" evidence="2">
    <location>
        <begin position="229"/>
        <end position="246"/>
    </location>
</feature>
<comment type="function">
    <text evidence="1">One of the primary rRNA binding proteins. Required for association of the 30S and 50S subunits to form the 70S ribosome, for tRNA binding and peptide bond formation. It has been suggested to have peptidyltransferase activity; this is somewhat controversial. Makes several contacts with the 16S rRNA in the 70S ribosome.</text>
</comment>
<comment type="subunit">
    <text evidence="1">Part of the 50S ribosomal subunit. Forms a bridge to the 30S subunit in the 70S ribosome.</text>
</comment>
<comment type="similarity">
    <text evidence="1">Belongs to the universal ribosomal protein uL2 family.</text>
</comment>